<proteinExistence type="inferred from homology"/>
<gene>
    <name type="primary">fliH</name>
    <name type="ordered locus">BUsg_069</name>
</gene>
<keyword id="KW-1005">Bacterial flagellum biogenesis</keyword>
<keyword id="KW-1006">Bacterial flagellum protein export</keyword>
<keyword id="KW-0963">Cytoplasm</keyword>
<keyword id="KW-0653">Protein transport</keyword>
<keyword id="KW-0813">Transport</keyword>
<reference key="1">
    <citation type="journal article" date="2002" name="Science">
        <title>50 million years of genomic stasis in endosymbiotic bacteria.</title>
        <authorList>
            <person name="Tamas I."/>
            <person name="Klasson L."/>
            <person name="Canbaeck B."/>
            <person name="Naeslund A.K."/>
            <person name="Eriksson A.-S."/>
            <person name="Wernegreen J.J."/>
            <person name="Sandstroem J.P."/>
            <person name="Moran N.A."/>
            <person name="Andersson S.G.E."/>
        </authorList>
    </citation>
    <scope>NUCLEOTIDE SEQUENCE [LARGE SCALE GENOMIC DNA]</scope>
    <source>
        <strain>Sg</strain>
    </source>
</reference>
<feature type="chain" id="PRO_0000180891" description="Flagellar assembly protein FliH">
    <location>
        <begin position="1"/>
        <end position="221"/>
    </location>
</feature>
<dbReference type="EMBL" id="AE013218">
    <property type="protein sequence ID" value="AAM67639.1"/>
    <property type="molecule type" value="Genomic_DNA"/>
</dbReference>
<dbReference type="RefSeq" id="WP_011053605.1">
    <property type="nucleotide sequence ID" value="NC_004061.1"/>
</dbReference>
<dbReference type="SMR" id="Q8KA43"/>
<dbReference type="STRING" id="198804.BUsg_069"/>
<dbReference type="GeneID" id="93003539"/>
<dbReference type="KEGG" id="bas:BUsg_069"/>
<dbReference type="eggNOG" id="COG1317">
    <property type="taxonomic scope" value="Bacteria"/>
</dbReference>
<dbReference type="HOGENOM" id="CLU_1248678_0_0_6"/>
<dbReference type="Proteomes" id="UP000000416">
    <property type="component" value="Chromosome"/>
</dbReference>
<dbReference type="GO" id="GO:0009288">
    <property type="term" value="C:bacterial-type flagellum"/>
    <property type="evidence" value="ECO:0007669"/>
    <property type="project" value="InterPro"/>
</dbReference>
<dbReference type="GO" id="GO:0005829">
    <property type="term" value="C:cytosol"/>
    <property type="evidence" value="ECO:0007669"/>
    <property type="project" value="TreeGrafter"/>
</dbReference>
<dbReference type="GO" id="GO:0003774">
    <property type="term" value="F:cytoskeletal motor activity"/>
    <property type="evidence" value="ECO:0007669"/>
    <property type="project" value="InterPro"/>
</dbReference>
<dbReference type="GO" id="GO:0044781">
    <property type="term" value="P:bacterial-type flagellum organization"/>
    <property type="evidence" value="ECO:0007669"/>
    <property type="project" value="UniProtKB-KW"/>
</dbReference>
<dbReference type="GO" id="GO:0071973">
    <property type="term" value="P:bacterial-type flagellum-dependent cell motility"/>
    <property type="evidence" value="ECO:0007669"/>
    <property type="project" value="InterPro"/>
</dbReference>
<dbReference type="GO" id="GO:0015031">
    <property type="term" value="P:protein transport"/>
    <property type="evidence" value="ECO:0007669"/>
    <property type="project" value="UniProtKB-KW"/>
</dbReference>
<dbReference type="InterPro" id="IPR000563">
    <property type="entry name" value="Flag_FliH"/>
</dbReference>
<dbReference type="InterPro" id="IPR018035">
    <property type="entry name" value="Flagellar_FliH/T3SS_HrpE"/>
</dbReference>
<dbReference type="InterPro" id="IPR051472">
    <property type="entry name" value="T3SS_Stator/FliH"/>
</dbReference>
<dbReference type="PANTHER" id="PTHR34982:SF1">
    <property type="entry name" value="FLAGELLAR ASSEMBLY PROTEIN FLIH"/>
    <property type="match status" value="1"/>
</dbReference>
<dbReference type="PANTHER" id="PTHR34982">
    <property type="entry name" value="YOP PROTEINS TRANSLOCATION PROTEIN L"/>
    <property type="match status" value="1"/>
</dbReference>
<dbReference type="Pfam" id="PF02108">
    <property type="entry name" value="FliH"/>
    <property type="match status" value="1"/>
</dbReference>
<dbReference type="PRINTS" id="PR01003">
    <property type="entry name" value="FLGFLIH"/>
</dbReference>
<evidence type="ECO:0000250" key="1"/>
<evidence type="ECO:0000305" key="2"/>
<organism>
    <name type="scientific">Buchnera aphidicola subsp. Schizaphis graminum (strain Sg)</name>
    <dbReference type="NCBI Taxonomy" id="198804"/>
    <lineage>
        <taxon>Bacteria</taxon>
        <taxon>Pseudomonadati</taxon>
        <taxon>Pseudomonadota</taxon>
        <taxon>Gammaproteobacteria</taxon>
        <taxon>Enterobacterales</taxon>
        <taxon>Erwiniaceae</taxon>
        <taxon>Buchnera</taxon>
    </lineage>
</organism>
<protein>
    <recommendedName>
        <fullName>Flagellar assembly protein FliH</fullName>
    </recommendedName>
</protein>
<name>FLIH_BUCAP</name>
<comment type="function">
    <text evidence="1">Needed for flagellar regrowth and assembly.</text>
</comment>
<comment type="subcellular location">
    <subcellularLocation>
        <location evidence="2">Cytoplasm</location>
    </subcellularLocation>
</comment>
<comment type="similarity">
    <text evidence="2">Belongs to the FliH family.</text>
</comment>
<accession>Q8KA43</accession>
<sequence>MSNIDVKQNWKRWYPEEIFLKNSKNKKKYFWNLYKLTQQDFFTNNENKKNSNKLKKTDELKDYPSKEEAYNLAFKSGIEKKEEKKILFNDNLNKLLSNFEAAISLFDQMLFTRLLKTILIISSYIVGKNIKMDELILLKNVKKIINNDSFFLKKKQLIIHPNNKKFLEKIIKNSVYSDKWELCYDVNIDINGCKIRSENGDIDNTIEARWKELCRLVSEEC</sequence>